<gene>
    <name evidence="2" type="primary">gshB</name>
    <name type="synonym">gsh-II</name>
    <name type="ordered locus">BB2152</name>
</gene>
<dbReference type="EC" id="6.3.2.3" evidence="2"/>
<dbReference type="EMBL" id="BX640443">
    <property type="protein sequence ID" value="CAE32648.1"/>
    <property type="molecule type" value="Genomic_DNA"/>
</dbReference>
<dbReference type="RefSeq" id="WP_003812603.1">
    <property type="nucleotide sequence ID" value="NC_002927.3"/>
</dbReference>
<dbReference type="SMR" id="Q7WKF5"/>
<dbReference type="GeneID" id="93203737"/>
<dbReference type="KEGG" id="bbr:BB2152"/>
<dbReference type="eggNOG" id="COG0189">
    <property type="taxonomic scope" value="Bacteria"/>
</dbReference>
<dbReference type="HOGENOM" id="CLU_068239_0_0_4"/>
<dbReference type="UniPathway" id="UPA00142">
    <property type="reaction ID" value="UER00210"/>
</dbReference>
<dbReference type="Proteomes" id="UP000001027">
    <property type="component" value="Chromosome"/>
</dbReference>
<dbReference type="GO" id="GO:0005737">
    <property type="term" value="C:cytoplasm"/>
    <property type="evidence" value="ECO:0007669"/>
    <property type="project" value="TreeGrafter"/>
</dbReference>
<dbReference type="GO" id="GO:0005524">
    <property type="term" value="F:ATP binding"/>
    <property type="evidence" value="ECO:0007669"/>
    <property type="project" value="UniProtKB-UniRule"/>
</dbReference>
<dbReference type="GO" id="GO:0004363">
    <property type="term" value="F:glutathione synthase activity"/>
    <property type="evidence" value="ECO:0007669"/>
    <property type="project" value="UniProtKB-UniRule"/>
</dbReference>
<dbReference type="GO" id="GO:0046872">
    <property type="term" value="F:metal ion binding"/>
    <property type="evidence" value="ECO:0007669"/>
    <property type="project" value="UniProtKB-KW"/>
</dbReference>
<dbReference type="FunFam" id="3.30.1490.20:FF:000009">
    <property type="entry name" value="Glutathione synthetase"/>
    <property type="match status" value="1"/>
</dbReference>
<dbReference type="Gene3D" id="3.40.50.20">
    <property type="match status" value="1"/>
</dbReference>
<dbReference type="Gene3D" id="3.30.1490.20">
    <property type="entry name" value="ATP-grasp fold, A domain"/>
    <property type="match status" value="1"/>
</dbReference>
<dbReference type="Gene3D" id="3.30.470.20">
    <property type="entry name" value="ATP-grasp fold, B domain"/>
    <property type="match status" value="1"/>
</dbReference>
<dbReference type="HAMAP" id="MF_00162">
    <property type="entry name" value="GSH_S"/>
    <property type="match status" value="1"/>
</dbReference>
<dbReference type="InterPro" id="IPR011761">
    <property type="entry name" value="ATP-grasp"/>
</dbReference>
<dbReference type="InterPro" id="IPR013815">
    <property type="entry name" value="ATP_grasp_subdomain_1"/>
</dbReference>
<dbReference type="InterPro" id="IPR006284">
    <property type="entry name" value="Glut_synth_pro"/>
</dbReference>
<dbReference type="InterPro" id="IPR004218">
    <property type="entry name" value="GSHS_ATP-bd"/>
</dbReference>
<dbReference type="InterPro" id="IPR004215">
    <property type="entry name" value="GSHS_N"/>
</dbReference>
<dbReference type="InterPro" id="IPR016185">
    <property type="entry name" value="PreATP-grasp_dom_sf"/>
</dbReference>
<dbReference type="NCBIfam" id="TIGR01380">
    <property type="entry name" value="glut_syn"/>
    <property type="match status" value="1"/>
</dbReference>
<dbReference type="NCBIfam" id="NF003573">
    <property type="entry name" value="PRK05246.1"/>
    <property type="match status" value="1"/>
</dbReference>
<dbReference type="PANTHER" id="PTHR21621:SF4">
    <property type="entry name" value="GLUTATHIONE SYNTHETASE"/>
    <property type="match status" value="1"/>
</dbReference>
<dbReference type="PANTHER" id="PTHR21621">
    <property type="entry name" value="RIBOSOMAL PROTEIN S6 MODIFICATION PROTEIN"/>
    <property type="match status" value="1"/>
</dbReference>
<dbReference type="Pfam" id="PF02955">
    <property type="entry name" value="GSH-S_ATP"/>
    <property type="match status" value="1"/>
</dbReference>
<dbReference type="Pfam" id="PF02951">
    <property type="entry name" value="GSH-S_N"/>
    <property type="match status" value="1"/>
</dbReference>
<dbReference type="SUPFAM" id="SSF56059">
    <property type="entry name" value="Glutathione synthetase ATP-binding domain-like"/>
    <property type="match status" value="1"/>
</dbReference>
<dbReference type="SUPFAM" id="SSF52440">
    <property type="entry name" value="PreATP-grasp domain"/>
    <property type="match status" value="1"/>
</dbReference>
<dbReference type="PROSITE" id="PS50975">
    <property type="entry name" value="ATP_GRASP"/>
    <property type="match status" value="1"/>
</dbReference>
<accession>Q7WKF5</accession>
<organism>
    <name type="scientific">Bordetella bronchiseptica (strain ATCC BAA-588 / NCTC 13252 / RB50)</name>
    <name type="common">Alcaligenes bronchisepticus</name>
    <dbReference type="NCBI Taxonomy" id="257310"/>
    <lineage>
        <taxon>Bacteria</taxon>
        <taxon>Pseudomonadati</taxon>
        <taxon>Pseudomonadota</taxon>
        <taxon>Betaproteobacteria</taxon>
        <taxon>Burkholderiales</taxon>
        <taxon>Alcaligenaceae</taxon>
        <taxon>Bordetella</taxon>
    </lineage>
</organism>
<sequence>MHVLFIIDPLPLLKAYKDSSVAMMQALQARGHTLSVALQGDLYIDAGEVRTRFAPIALRDGADLHGHDWWRETGAADEAPLARFDAVVMRKDPPFDMEYVYSTHLLEYAQQQGARVFNSGAAIRNHPEKLAITEFPDLTTPTLVTRDMGRIRAFHAAQGDVIVKPLDGMGGTGIFRLQRSEPNLNAILETLTDNGTRTIMAQRYIPEIVKGDKRILLIGGEPVPYSLARIPLAGETRGNLAAGGRGVAQPLSERDLHLARTVADRLAGRGLLLVGLDVIGDYITEVNVTSPTCFVEITEQTGFNVPEMFAVALESAAG</sequence>
<comment type="catalytic activity">
    <reaction evidence="2">
        <text>gamma-L-glutamyl-L-cysteine + glycine + ATP = glutathione + ADP + phosphate + H(+)</text>
        <dbReference type="Rhea" id="RHEA:13557"/>
        <dbReference type="ChEBI" id="CHEBI:15378"/>
        <dbReference type="ChEBI" id="CHEBI:30616"/>
        <dbReference type="ChEBI" id="CHEBI:43474"/>
        <dbReference type="ChEBI" id="CHEBI:57305"/>
        <dbReference type="ChEBI" id="CHEBI:57925"/>
        <dbReference type="ChEBI" id="CHEBI:58173"/>
        <dbReference type="ChEBI" id="CHEBI:456216"/>
        <dbReference type="EC" id="6.3.2.3"/>
    </reaction>
</comment>
<comment type="cofactor">
    <cofactor evidence="1">
        <name>Mg(2+)</name>
        <dbReference type="ChEBI" id="CHEBI:18420"/>
    </cofactor>
    <cofactor evidence="1">
        <name>Mn(2+)</name>
        <dbReference type="ChEBI" id="CHEBI:29035"/>
    </cofactor>
    <text evidence="1">Binds 1 Mg(2+) or Mn(2+) ion per subunit.</text>
</comment>
<comment type="pathway">
    <text evidence="2">Sulfur metabolism; glutathione biosynthesis; glutathione from L-cysteine and L-glutamate: step 2/2.</text>
</comment>
<comment type="similarity">
    <text evidence="2">Belongs to the prokaryotic GSH synthase family.</text>
</comment>
<proteinExistence type="inferred from homology"/>
<evidence type="ECO:0000250" key="1"/>
<evidence type="ECO:0000255" key="2">
    <source>
        <dbReference type="HAMAP-Rule" id="MF_00162"/>
    </source>
</evidence>
<reference key="1">
    <citation type="journal article" date="2003" name="Nat. Genet.">
        <title>Comparative analysis of the genome sequences of Bordetella pertussis, Bordetella parapertussis and Bordetella bronchiseptica.</title>
        <authorList>
            <person name="Parkhill J."/>
            <person name="Sebaihia M."/>
            <person name="Preston A."/>
            <person name="Murphy L.D."/>
            <person name="Thomson N.R."/>
            <person name="Harris D.E."/>
            <person name="Holden M.T.G."/>
            <person name="Churcher C.M."/>
            <person name="Bentley S.D."/>
            <person name="Mungall K.L."/>
            <person name="Cerdeno-Tarraga A.-M."/>
            <person name="Temple L."/>
            <person name="James K.D."/>
            <person name="Harris B."/>
            <person name="Quail M.A."/>
            <person name="Achtman M."/>
            <person name="Atkin R."/>
            <person name="Baker S."/>
            <person name="Basham D."/>
            <person name="Bason N."/>
            <person name="Cherevach I."/>
            <person name="Chillingworth T."/>
            <person name="Collins M."/>
            <person name="Cronin A."/>
            <person name="Davis P."/>
            <person name="Doggett J."/>
            <person name="Feltwell T."/>
            <person name="Goble A."/>
            <person name="Hamlin N."/>
            <person name="Hauser H."/>
            <person name="Holroyd S."/>
            <person name="Jagels K."/>
            <person name="Leather S."/>
            <person name="Moule S."/>
            <person name="Norberczak H."/>
            <person name="O'Neil S."/>
            <person name="Ormond D."/>
            <person name="Price C."/>
            <person name="Rabbinowitsch E."/>
            <person name="Rutter S."/>
            <person name="Sanders M."/>
            <person name="Saunders D."/>
            <person name="Seeger K."/>
            <person name="Sharp S."/>
            <person name="Simmonds M."/>
            <person name="Skelton J."/>
            <person name="Squares R."/>
            <person name="Squares S."/>
            <person name="Stevens K."/>
            <person name="Unwin L."/>
            <person name="Whitehead S."/>
            <person name="Barrell B.G."/>
            <person name="Maskell D.J."/>
        </authorList>
    </citation>
    <scope>NUCLEOTIDE SEQUENCE [LARGE SCALE GENOMIC DNA]</scope>
    <source>
        <strain>ATCC BAA-588 / NCTC 13252 / RB50</strain>
    </source>
</reference>
<feature type="chain" id="PRO_0000197453" description="Glutathione synthetase">
    <location>
        <begin position="1"/>
        <end position="318"/>
    </location>
</feature>
<feature type="domain" description="ATP-grasp" evidence="2">
    <location>
        <begin position="129"/>
        <end position="314"/>
    </location>
</feature>
<feature type="binding site" evidence="2">
    <location>
        <begin position="155"/>
        <end position="211"/>
    </location>
    <ligand>
        <name>ATP</name>
        <dbReference type="ChEBI" id="CHEBI:30616"/>
    </ligand>
</feature>
<feature type="binding site" evidence="2">
    <location>
        <position position="285"/>
    </location>
    <ligand>
        <name>Mg(2+)</name>
        <dbReference type="ChEBI" id="CHEBI:18420"/>
    </ligand>
</feature>
<feature type="binding site" evidence="2">
    <location>
        <position position="287"/>
    </location>
    <ligand>
        <name>Mg(2+)</name>
        <dbReference type="ChEBI" id="CHEBI:18420"/>
    </ligand>
</feature>
<name>GSHB_BORBR</name>
<protein>
    <recommendedName>
        <fullName evidence="2">Glutathione synthetase</fullName>
        <ecNumber evidence="2">6.3.2.3</ecNumber>
    </recommendedName>
    <alternativeName>
        <fullName evidence="2">GSH synthetase</fullName>
        <shortName evidence="2">GSH-S</shortName>
        <shortName evidence="2">GSHase</shortName>
    </alternativeName>
    <alternativeName>
        <fullName evidence="2">Glutathione synthase</fullName>
    </alternativeName>
</protein>
<keyword id="KW-0067">ATP-binding</keyword>
<keyword id="KW-0317">Glutathione biosynthesis</keyword>
<keyword id="KW-0436">Ligase</keyword>
<keyword id="KW-0460">Magnesium</keyword>
<keyword id="KW-0464">Manganese</keyword>
<keyword id="KW-0479">Metal-binding</keyword>
<keyword id="KW-0547">Nucleotide-binding</keyword>